<evidence type="ECO:0000250" key="1">
    <source>
        <dbReference type="UniProtKB" id="Q96242"/>
    </source>
</evidence>
<evidence type="ECO:0000255" key="2"/>
<evidence type="ECO:0000269" key="3">
    <source>
    </source>
</evidence>
<evidence type="ECO:0000303" key="4">
    <source>
    </source>
</evidence>
<evidence type="ECO:0000305" key="5"/>
<dbReference type="EC" id="1.14.19.50" evidence="3"/>
<dbReference type="EMBL" id="KT693311">
    <property type="protein sequence ID" value="AMO65741.1"/>
    <property type="molecule type" value="mRNA"/>
</dbReference>
<dbReference type="SMR" id="A0A140IL90"/>
<dbReference type="KEGG" id="ag:AMO65741"/>
<dbReference type="BioCyc" id="MetaCyc:MONOMER-20066"/>
<dbReference type="BRENDA" id="1.14.19.50">
    <property type="organism ID" value="14577"/>
</dbReference>
<dbReference type="GO" id="GO:0016020">
    <property type="term" value="C:membrane"/>
    <property type="evidence" value="ECO:0007669"/>
    <property type="project" value="UniProtKB-SubCell"/>
</dbReference>
<dbReference type="GO" id="GO:0020037">
    <property type="term" value="F:heme binding"/>
    <property type="evidence" value="ECO:0007669"/>
    <property type="project" value="InterPro"/>
</dbReference>
<dbReference type="GO" id="GO:0005506">
    <property type="term" value="F:iron ion binding"/>
    <property type="evidence" value="ECO:0007669"/>
    <property type="project" value="InterPro"/>
</dbReference>
<dbReference type="GO" id="GO:0004497">
    <property type="term" value="F:monooxygenase activity"/>
    <property type="evidence" value="ECO:0007669"/>
    <property type="project" value="UniProtKB-KW"/>
</dbReference>
<dbReference type="GO" id="GO:0016705">
    <property type="term" value="F:oxidoreductase activity, acting on paired donors, with incorporation or reduction of molecular oxygen"/>
    <property type="evidence" value="ECO:0007669"/>
    <property type="project" value="InterPro"/>
</dbReference>
<dbReference type="GO" id="GO:0009820">
    <property type="term" value="P:alkaloid metabolic process"/>
    <property type="evidence" value="ECO:0007669"/>
    <property type="project" value="UniProtKB-KW"/>
</dbReference>
<dbReference type="GO" id="GO:0006629">
    <property type="term" value="P:lipid metabolic process"/>
    <property type="evidence" value="ECO:0007669"/>
    <property type="project" value="UniProtKB-ARBA"/>
</dbReference>
<dbReference type="CDD" id="cd11064">
    <property type="entry name" value="CYP86A"/>
    <property type="match status" value="1"/>
</dbReference>
<dbReference type="Gene3D" id="1.10.630.10">
    <property type="entry name" value="Cytochrome P450"/>
    <property type="match status" value="1"/>
</dbReference>
<dbReference type="InterPro" id="IPR001128">
    <property type="entry name" value="Cyt_P450"/>
</dbReference>
<dbReference type="InterPro" id="IPR017972">
    <property type="entry name" value="Cyt_P450_CS"/>
</dbReference>
<dbReference type="InterPro" id="IPR002401">
    <property type="entry name" value="Cyt_P450_E_grp-I"/>
</dbReference>
<dbReference type="InterPro" id="IPR036396">
    <property type="entry name" value="Cyt_P450_sf"/>
</dbReference>
<dbReference type="PANTHER" id="PTHR24296">
    <property type="entry name" value="CYTOCHROME P450"/>
    <property type="match status" value="1"/>
</dbReference>
<dbReference type="Pfam" id="PF00067">
    <property type="entry name" value="p450"/>
    <property type="match status" value="1"/>
</dbReference>
<dbReference type="PRINTS" id="PR00463">
    <property type="entry name" value="EP450I"/>
</dbReference>
<dbReference type="PRINTS" id="PR00385">
    <property type="entry name" value="P450"/>
</dbReference>
<dbReference type="SUPFAM" id="SSF48264">
    <property type="entry name" value="Cytochrome P450"/>
    <property type="match status" value="1"/>
</dbReference>
<dbReference type="PROSITE" id="PS00086">
    <property type="entry name" value="CYTOCHROME_P450"/>
    <property type="match status" value="1"/>
</dbReference>
<gene>
    <name evidence="4" type="primary">Cyp96T1</name>
</gene>
<keyword id="KW-0017">Alkaloid metabolism</keyword>
<keyword id="KW-0349">Heme</keyword>
<keyword id="KW-0408">Iron</keyword>
<keyword id="KW-0472">Membrane</keyword>
<keyword id="KW-0479">Metal-binding</keyword>
<keyword id="KW-0503">Monooxygenase</keyword>
<keyword id="KW-0560">Oxidoreductase</keyword>
<keyword id="KW-0812">Transmembrane</keyword>
<keyword id="KW-1133">Transmembrane helix</keyword>
<proteinExistence type="evidence at protein level"/>
<protein>
    <recommendedName>
        <fullName evidence="4">Noroxomaritidine synthase</fullName>
        <ecNumber evidence="3">1.14.19.50</ecNumber>
    </recommendedName>
    <alternativeName>
        <fullName evidence="4">CYP96T1</fullName>
    </alternativeName>
    <alternativeName>
        <fullName evidence="4">Cytochrome P450 96T1</fullName>
    </alternativeName>
</protein>
<sequence length="513" mass="59001">MATSSSAWLMFSDHYPEILIAIACFLIFSLLLSARSSSEDSLPYNWPIFGMLPAIISNNQFNDFTTARLRKMGWTFIFKGPWLLDMDYIFTCDPSNINHMFNDNFENYPKGELGKVFDIFGNNIFNADGDLWHDHRKMAQTILWDGNYRTMQATFIRNKMDNALIPILDSAASKRKPVDLQDVFFRFTFDTSCFSVLAADPESLTMEFPAVPFSKAADQALDAALTRHITPRLIWKLKRFFNVGSERTLAVAWKVIDSYIYDKIAELKAKRKLVGKINSYDAVSFYMDNFNIHDDKFLRDNAFTYLLAQRNTQSLTMTWLFYALFENPKVELKILSELKSIVDESSERKFNDGFALFDSNMIQSAIYLHATLCEALRIYPPVPFEIKDAHKADVLPSGHKVRAGEKILFSPYAMARMKGIWGDDCLEFKPERWITGNGTLKHEPAYKFFAFSAGPRICLGKELSFTQMKMVVATIIYNFHLQMVKGHVVEQSNSILMDMKHGLMVQVRKRSVM</sequence>
<accession>A0A140IL90</accession>
<comment type="function">
    <text evidence="3">Cytochrome P450 that catalyzes an intramolecular para-para' C-C phenol coupling of 4'-O-methylnorbelladine in alkaloids biosynthesis, including haemanthamine- and crinamine-type alkaloids, promising anticancer agents. Catalyzes the formation of (10bR,4aS)-noroxomaritidine and (10bS,4aR)-noroxomaritidine from 4'-O-methylnorbelladine. Also produces N-demethylnarwedine as a minor product. Involved in the biosynthesis of haemanthamine. Can also use 4'-O-methyl-N-methylnorbelladine, (S)- and (R)-coclaurine as substrates, but not 3'-O-methylnorbelladine, 3',4'-O-dimethylnorbelladine, norbelladine, haemanthamine, (10bS,4aR)- or (10bR,4aS)-noroxomaritidine, isovanillin or tyramine.</text>
</comment>
<comment type="catalytic activity">
    <reaction evidence="3">
        <text>4'-O-methylnorbelladine + reduced [NADPH--hemoprotein reductase] + O2 = (10bS,4aR)-noroxomaritidine + oxidized [NADPH--hemoprotein reductase] + 2 H2O + H(+)</text>
        <dbReference type="Rhea" id="RHEA:51264"/>
        <dbReference type="Rhea" id="RHEA-COMP:11964"/>
        <dbReference type="Rhea" id="RHEA-COMP:11965"/>
        <dbReference type="ChEBI" id="CHEBI:15377"/>
        <dbReference type="ChEBI" id="CHEBI:15378"/>
        <dbReference type="ChEBI" id="CHEBI:15379"/>
        <dbReference type="ChEBI" id="CHEBI:57618"/>
        <dbReference type="ChEBI" id="CHEBI:58210"/>
        <dbReference type="ChEBI" id="CHEBI:133993"/>
        <dbReference type="ChEBI" id="CHEBI:133996"/>
        <dbReference type="EC" id="1.14.19.50"/>
    </reaction>
</comment>
<comment type="catalytic activity">
    <reaction evidence="3">
        <text>4'-O-methylnorbelladine + reduced [NADPH--hemoprotein reductase] + O2 = (10bR,4aS)-noroxomaritidine + oxidized [NADPH--hemoprotein reductase] + 2 H2O + H(+)</text>
        <dbReference type="Rhea" id="RHEA:51260"/>
        <dbReference type="Rhea" id="RHEA-COMP:11964"/>
        <dbReference type="Rhea" id="RHEA-COMP:11965"/>
        <dbReference type="ChEBI" id="CHEBI:15377"/>
        <dbReference type="ChEBI" id="CHEBI:15378"/>
        <dbReference type="ChEBI" id="CHEBI:15379"/>
        <dbReference type="ChEBI" id="CHEBI:57618"/>
        <dbReference type="ChEBI" id="CHEBI:58210"/>
        <dbReference type="ChEBI" id="CHEBI:133993"/>
        <dbReference type="ChEBI" id="CHEBI:133995"/>
        <dbReference type="EC" id="1.14.19.50"/>
    </reaction>
</comment>
<comment type="cofactor">
    <cofactor evidence="5">
        <name>heme</name>
        <dbReference type="ChEBI" id="CHEBI:30413"/>
    </cofactor>
</comment>
<comment type="biophysicochemical properties">
    <kinetics>
        <KM evidence="3">1.13 uM for 4'-O-methylnorbelladine</KM>
        <KM evidence="3">3.28 uM for 4'-O-methyl-N-methylnorbelladine</KM>
        <KM evidence="3">637 uM for (S)-coclaurine</KM>
        <KM evidence="3">659 uM for (R)-coclaurine</KM>
        <text evidence="3">kcat is 15.0 min(-1) with 4'-O-methylnorbelladine as substrate. kcat is 2.44 min(-1) with 4'-O-methyl-N-methylnorbelladine as substrate. kcat is 1.34 min(-1) with (S)-coclaurine as substrate. kcat is 2.07 min(-1) with (R)-coclaurine as substrate.</text>
    </kinetics>
    <phDependence>
        <text evidence="3">Optimum pH is 6.5.</text>
    </phDependence>
    <temperatureDependence>
        <text evidence="3">Optimum temperature is 30 degrees Celsius.</text>
    </temperatureDependence>
</comment>
<comment type="pathway">
    <text evidence="3">Alkaloid biosynthesis.</text>
</comment>
<comment type="subcellular location">
    <subcellularLocation>
        <location evidence="2">Membrane</location>
        <topology evidence="2">Single-pass membrane protein</topology>
    </subcellularLocation>
</comment>
<comment type="similarity">
    <text evidence="5">Belongs to the cytochrome P450 family.</text>
</comment>
<organism>
    <name type="scientific">Narcissus aff. pseudonarcissus MK-2014</name>
    <name type="common">Daffodil</name>
    <dbReference type="NCBI Taxonomy" id="1540222"/>
    <lineage>
        <taxon>Eukaryota</taxon>
        <taxon>Viridiplantae</taxon>
        <taxon>Streptophyta</taxon>
        <taxon>Embryophyta</taxon>
        <taxon>Tracheophyta</taxon>
        <taxon>Spermatophyta</taxon>
        <taxon>Magnoliopsida</taxon>
        <taxon>Liliopsida</taxon>
        <taxon>Asparagales</taxon>
        <taxon>Amaryllidaceae</taxon>
        <taxon>Amaryllidoideae</taxon>
        <taxon>Narcissus</taxon>
    </lineage>
</organism>
<feature type="chain" id="PRO_0000439852" description="Noroxomaritidine synthase">
    <location>
        <begin position="1"/>
        <end position="513"/>
    </location>
</feature>
<feature type="transmembrane region" description="Helical" evidence="2">
    <location>
        <begin position="14"/>
        <end position="34"/>
    </location>
</feature>
<feature type="binding site" description="axial binding residue" evidence="1">
    <location>
        <position position="458"/>
    </location>
    <ligand>
        <name>heme</name>
        <dbReference type="ChEBI" id="CHEBI:30413"/>
    </ligand>
    <ligandPart>
        <name>Fe</name>
        <dbReference type="ChEBI" id="CHEBI:18248"/>
    </ligandPart>
</feature>
<reference key="1">
    <citation type="journal article" date="2016" name="Front. Plant Sci.">
        <title>CYP96T1 of Narcissus sp. aff. pseudonarcissus catalyzes formation of the para-para' C-C phenol couple in the Amaryllidaceae alkaloids.</title>
        <authorList>
            <person name="Kilgore M.B."/>
            <person name="Augustin M.M."/>
            <person name="May G.D."/>
            <person name="Crow J.A."/>
            <person name="Kutchan T.M."/>
        </authorList>
    </citation>
    <scope>NUCLEOTIDE SEQUENCE [MRNA]</scope>
    <scope>FUNCTION</scope>
    <scope>BIOPHYSICOCHEMICAL PROPERTIES</scope>
    <scope>SUBSTRATE SPECIFICITY</scope>
    <scope>PATHWAY</scope>
</reference>
<name>C96T1_NARAP</name>